<feature type="chain" id="PRO_0000461641" description="Protein AGAMOUS-LIKE 6">
    <location>
        <begin position="1"/>
        <end position="252"/>
    </location>
</feature>
<feature type="domain" description="MADS-box" evidence="1">
    <location>
        <begin position="1"/>
        <end position="61"/>
    </location>
</feature>
<feature type="domain" description="K-box" evidence="2">
    <location>
        <begin position="85"/>
        <end position="175"/>
    </location>
</feature>
<feature type="short sequence motif" description="Nuclear localization signal 1" evidence="3">
    <location>
        <begin position="8"/>
        <end position="15"/>
    </location>
</feature>
<feature type="short sequence motif" description="Nuclear localization signal 2" evidence="3">
    <location>
        <begin position="138"/>
        <end position="145"/>
    </location>
</feature>
<sequence length="252" mass="28609">MGRGRVELKRIENKINRQVTFSKRRNGLLKKAYELSVLCEAEVALIIFSSRGKLYEFGSAGITKTLERYQRCCLNPQDNCGERETQSWYQEVSKLKAKFEALQRTQRHLLGEDLGALSVKELQNLEKQLEGALAQARQRKTQIMMEQMEELRRKERHLGDVNKQLKIKVSLELSSFEGEGQGVPFPWSNCNASLDEAGSSTFHVHHSQSNHMDCDLPDPVLQIGYHQYMAADGASGSRNMAVESNIIHGWGL</sequence>
<comment type="function">
    <text evidence="4">Probable transcription factor involved in fruit development (PubMed:27862876). Key regulator of the transition between the state of 'ovary arrest' imposed towards anthesis and the fertilization-triggered fruit set (PubMed:27862876).</text>
</comment>
<comment type="subcellular location">
    <subcellularLocation>
        <location evidence="1 3">Nucleus</location>
    </subcellularLocation>
</comment>
<comment type="tissue specificity">
    <text evidence="4">Restricted to flowers.</text>
</comment>
<comment type="developmental stage">
    <text evidence="4">Highly expressed only in flower meristems, flower buds and open flowers, but declines sharply in developing fertilized fruits (PubMed:27862876). In developing ovaries, accumulates in developing ovaries to reach a peak towards the stage of 'ovary arrest' (pre-anthesis) (PubMed:27862876). Levels remain high at anthesis, but fades out quickly 5 days post-anthesis (PubMed:27862876).</text>
</comment>
<comment type="disruption phenotype">
    <text evidence="4">Parthenocarpic in a temperature-dependent manner, thus producing seedless fruits of normal weight and shape under heat stress (at 38 degrees Celsius) (PubMed:27862876). Normal pollen viability and sexual reproduction capacity at ambient temperature, but slightly paler, narrower and longer petals (PubMed:27862876).</text>
</comment>
<comment type="biotechnology">
    <text evidence="7">Attractive locus for facultative parthenocarpy leading to the production of seedless fruits.</text>
</comment>
<accession>A0A3Q7EKL1</accession>
<name>AGL6_SOLLC</name>
<protein>
    <recommendedName>
        <fullName evidence="5">Protein AGAMOUS-LIKE 6</fullName>
        <shortName evidence="5">SlAGAMOUS-LIKE 6</shortName>
        <shortName evidence="5">SlAGL6</shortName>
    </recommendedName>
    <alternativeName>
        <fullName evidence="6">Agamous-like MADS-box protein AGL6</fullName>
    </alternativeName>
</protein>
<dbReference type="RefSeq" id="NP_001348459.1">
    <property type="nucleotide sequence ID" value="NM_001361530.1"/>
</dbReference>
<dbReference type="RefSeq" id="XP_004229868.1">
    <property type="nucleotide sequence ID" value="XM_004229820.3"/>
</dbReference>
<dbReference type="SMR" id="A0A3Q7EKL1"/>
<dbReference type="FunCoup" id="A0A3Q7EKL1">
    <property type="interactions" value="20"/>
</dbReference>
<dbReference type="STRING" id="4081.A0A3Q7EKL1"/>
<dbReference type="PaxDb" id="4081-Solyc01g093960.2.1"/>
<dbReference type="EnsemblPlants" id="Solyc01g093960.3.1">
    <property type="protein sequence ID" value="Solyc01g093960.3.1"/>
    <property type="gene ID" value="Solyc01g093960.3"/>
</dbReference>
<dbReference type="GeneID" id="101268317"/>
<dbReference type="Gramene" id="Solyc01g093960.3.1">
    <property type="protein sequence ID" value="Solyc01g093960.3.1"/>
    <property type="gene ID" value="Solyc01g093960.3"/>
</dbReference>
<dbReference type="InParanoid" id="A0A3Q7EKL1"/>
<dbReference type="OMA" id="NFVQGWV"/>
<dbReference type="OrthoDB" id="1898716at2759"/>
<dbReference type="Proteomes" id="UP000004994">
    <property type="component" value="Chromosome 1"/>
</dbReference>
<dbReference type="GO" id="GO:0005634">
    <property type="term" value="C:nucleus"/>
    <property type="evidence" value="ECO:0007669"/>
    <property type="project" value="UniProtKB-SubCell"/>
</dbReference>
<dbReference type="GO" id="GO:0000981">
    <property type="term" value="F:DNA-binding transcription factor activity, RNA polymerase II-specific"/>
    <property type="evidence" value="ECO:0000318"/>
    <property type="project" value="GO_Central"/>
</dbReference>
<dbReference type="GO" id="GO:0046983">
    <property type="term" value="F:protein dimerization activity"/>
    <property type="evidence" value="ECO:0007669"/>
    <property type="project" value="InterPro"/>
</dbReference>
<dbReference type="GO" id="GO:0000978">
    <property type="term" value="F:RNA polymerase II cis-regulatory region sequence-specific DNA binding"/>
    <property type="evidence" value="ECO:0000318"/>
    <property type="project" value="GO_Central"/>
</dbReference>
<dbReference type="GO" id="GO:0045944">
    <property type="term" value="P:positive regulation of transcription by RNA polymerase II"/>
    <property type="evidence" value="ECO:0007669"/>
    <property type="project" value="InterPro"/>
</dbReference>
<dbReference type="GO" id="GO:0006357">
    <property type="term" value="P:regulation of transcription by RNA polymerase II"/>
    <property type="evidence" value="ECO:0000318"/>
    <property type="project" value="GO_Central"/>
</dbReference>
<dbReference type="CDD" id="cd00265">
    <property type="entry name" value="MADS_MEF2_like"/>
    <property type="match status" value="1"/>
</dbReference>
<dbReference type="FunFam" id="3.40.1810.10:FF:000004">
    <property type="entry name" value="MADS-box transcription factor 1"/>
    <property type="match status" value="1"/>
</dbReference>
<dbReference type="Gene3D" id="3.40.1810.10">
    <property type="entry name" value="Transcription factor, MADS-box"/>
    <property type="match status" value="1"/>
</dbReference>
<dbReference type="InterPro" id="IPR050142">
    <property type="entry name" value="MADS-box/MEF2_TF"/>
</dbReference>
<dbReference type="InterPro" id="IPR033896">
    <property type="entry name" value="MEF2-like_N"/>
</dbReference>
<dbReference type="InterPro" id="IPR002487">
    <property type="entry name" value="TF_Kbox"/>
</dbReference>
<dbReference type="InterPro" id="IPR002100">
    <property type="entry name" value="TF_MADSbox"/>
</dbReference>
<dbReference type="InterPro" id="IPR036879">
    <property type="entry name" value="TF_MADSbox_sf"/>
</dbReference>
<dbReference type="PANTHER" id="PTHR48019">
    <property type="entry name" value="SERUM RESPONSE FACTOR HOMOLOG"/>
    <property type="match status" value="1"/>
</dbReference>
<dbReference type="Pfam" id="PF01486">
    <property type="entry name" value="K-box"/>
    <property type="match status" value="1"/>
</dbReference>
<dbReference type="Pfam" id="PF00319">
    <property type="entry name" value="SRF-TF"/>
    <property type="match status" value="1"/>
</dbReference>
<dbReference type="PRINTS" id="PR00404">
    <property type="entry name" value="MADSDOMAIN"/>
</dbReference>
<dbReference type="SMART" id="SM00432">
    <property type="entry name" value="MADS"/>
    <property type="match status" value="1"/>
</dbReference>
<dbReference type="SUPFAM" id="SSF55455">
    <property type="entry name" value="SRF-like"/>
    <property type="match status" value="1"/>
</dbReference>
<dbReference type="PROSITE" id="PS51297">
    <property type="entry name" value="K_BOX"/>
    <property type="match status" value="1"/>
</dbReference>
<dbReference type="PROSITE" id="PS00350">
    <property type="entry name" value="MADS_BOX_1"/>
    <property type="match status" value="1"/>
</dbReference>
<dbReference type="PROSITE" id="PS50066">
    <property type="entry name" value="MADS_BOX_2"/>
    <property type="match status" value="1"/>
</dbReference>
<keyword id="KW-0238">DNA-binding</keyword>
<keyword id="KW-0539">Nucleus</keyword>
<keyword id="KW-1185">Reference proteome</keyword>
<keyword id="KW-0804">Transcription</keyword>
<keyword id="KW-0805">Transcription regulation</keyword>
<organism>
    <name type="scientific">Solanum lycopersicum</name>
    <name type="common">Tomato</name>
    <name type="synonym">Lycopersicon esculentum</name>
    <dbReference type="NCBI Taxonomy" id="4081"/>
    <lineage>
        <taxon>Eukaryota</taxon>
        <taxon>Viridiplantae</taxon>
        <taxon>Streptophyta</taxon>
        <taxon>Embryophyta</taxon>
        <taxon>Tracheophyta</taxon>
        <taxon>Spermatophyta</taxon>
        <taxon>Magnoliopsida</taxon>
        <taxon>eudicotyledons</taxon>
        <taxon>Gunneridae</taxon>
        <taxon>Pentapetalae</taxon>
        <taxon>asterids</taxon>
        <taxon>lamiids</taxon>
        <taxon>Solanales</taxon>
        <taxon>Solanaceae</taxon>
        <taxon>Solanoideae</taxon>
        <taxon>Solaneae</taxon>
        <taxon>Solanum</taxon>
        <taxon>Solanum subgen. Lycopersicon</taxon>
    </lineage>
</organism>
<evidence type="ECO:0000255" key="1">
    <source>
        <dbReference type="PROSITE-ProRule" id="PRU00251"/>
    </source>
</evidence>
<evidence type="ECO:0000255" key="2">
    <source>
        <dbReference type="PROSITE-ProRule" id="PRU00629"/>
    </source>
</evidence>
<evidence type="ECO:0000255" key="3">
    <source>
        <dbReference type="PROSITE-ProRule" id="PRU00768"/>
    </source>
</evidence>
<evidence type="ECO:0000269" key="4">
    <source>
    </source>
</evidence>
<evidence type="ECO:0000303" key="5">
    <source>
    </source>
</evidence>
<evidence type="ECO:0000305" key="6"/>
<evidence type="ECO:0000305" key="7">
    <source>
    </source>
</evidence>
<proteinExistence type="evidence at transcript level"/>
<reference key="1">
    <citation type="journal article" date="2012" name="Nature">
        <title>The tomato genome sequence provides insights into fleshy fruit evolution.</title>
        <authorList>
            <consortium name="Tomato Genome Consortium"/>
        </authorList>
    </citation>
    <scope>NUCLEOTIDE SEQUENCE [LARGE SCALE GENOMIC DNA]</scope>
    <source>
        <strain>cv. Heinz 1706</strain>
    </source>
</reference>
<reference key="2">
    <citation type="submission" date="2018-04" db="EMBL/GenBank/DDBJ databases">
        <title>Improving the tomato reference genome and annotation using full-length BACs and diverse expression resources.</title>
        <authorList>
            <person name="Hosmani P.S."/>
            <person name="Flores M."/>
            <person name="Geest H.V."/>
            <person name="Sanchez-Perez G."/>
            <person name="Rombauts S."/>
            <person name="Maumus F."/>
            <person name="Mueller L.A."/>
            <person name="Saha S."/>
        </authorList>
    </citation>
    <scope>GENOME REANNOTATION</scope>
    <source>
        <strain>cv. Heinz 1706</strain>
    </source>
</reference>
<reference key="3">
    <citation type="journal article" date="2017" name="Plant Biotechnol. J.">
        <title>Tomato facultative parthenocarpy results from SlAGAMOUS-LIKE 6 loss of function.</title>
        <authorList>
            <person name="Klap C."/>
            <person name="Yeshayahou E."/>
            <person name="Bolger A.M."/>
            <person name="Arazi T."/>
            <person name="Gupta S.K."/>
            <person name="Shabtai S."/>
            <person name="Usadel B."/>
            <person name="Salts Y."/>
            <person name="Barg R."/>
        </authorList>
    </citation>
    <scope>FUNCTION</scope>
    <scope>DISRUPTION PHENOTYPE</scope>
    <scope>BIOTECHNOLOGY</scope>
    <scope>TISSUE SPECIFICITY</scope>
    <scope>DEVELOPMENTAL STAGE</scope>
    <source>
        <strain>cv. M82</strain>
        <strain>cv. Marmande</strain>
        <strain>cv. MP-1</strain>
    </source>
</reference>
<gene>
    <name evidence="5" type="primary">AGL6</name>
    <name evidence="6" type="ordered locus">Solyc01g093960</name>
</gene>